<name>MAND_CELJU</name>
<evidence type="ECO:0000250" key="1"/>
<evidence type="ECO:0000269" key="2">
    <source>
    </source>
</evidence>
<evidence type="ECO:0000305" key="3"/>
<evidence type="ECO:0007829" key="4">
    <source>
        <dbReference type="PDB" id="3V3W"/>
    </source>
</evidence>
<gene>
    <name type="primary">rspA</name>
    <name type="ordered locus">CJA_3069</name>
</gene>
<proteinExistence type="evidence at protein level"/>
<organism>
    <name type="scientific">Cellvibrio japonicus (strain Ueda107)</name>
    <name type="common">Pseudomonas fluorescens subsp. cellulosa</name>
    <dbReference type="NCBI Taxonomy" id="498211"/>
    <lineage>
        <taxon>Bacteria</taxon>
        <taxon>Pseudomonadati</taxon>
        <taxon>Pseudomonadota</taxon>
        <taxon>Gammaproteobacteria</taxon>
        <taxon>Cellvibrionales</taxon>
        <taxon>Cellvibrionaceae</taxon>
        <taxon>Cellvibrio</taxon>
    </lineage>
</organism>
<dbReference type="EC" id="4.2.1.-"/>
<dbReference type="EC" id="4.2.1.8"/>
<dbReference type="EMBL" id="CP000934">
    <property type="protein sequence ID" value="ACE86256.1"/>
    <property type="molecule type" value="Genomic_DNA"/>
</dbReference>
<dbReference type="RefSeq" id="WP_012488647.1">
    <property type="nucleotide sequence ID" value="NC_010995.1"/>
</dbReference>
<dbReference type="PDB" id="3V3W">
    <property type="method" value="X-ray"/>
    <property type="resolution" value="1.40 A"/>
    <property type="chains" value="A=1-402"/>
</dbReference>
<dbReference type="PDB" id="3V4B">
    <property type="method" value="X-ray"/>
    <property type="resolution" value="1.40 A"/>
    <property type="chains" value="A=1-402"/>
</dbReference>
<dbReference type="PDBsum" id="3V3W"/>
<dbReference type="PDBsum" id="3V4B"/>
<dbReference type="SMR" id="B3PDB1"/>
<dbReference type="STRING" id="498211.CJA_3069"/>
<dbReference type="KEGG" id="cja:CJA_3069"/>
<dbReference type="eggNOG" id="COG4948">
    <property type="taxonomic scope" value="Bacteria"/>
</dbReference>
<dbReference type="HOGENOM" id="CLU_030273_6_1_6"/>
<dbReference type="OrthoDB" id="103536at2"/>
<dbReference type="EvolutionaryTrace" id="B3PDB1"/>
<dbReference type="Proteomes" id="UP000001036">
    <property type="component" value="Chromosome"/>
</dbReference>
<dbReference type="GO" id="GO:0000287">
    <property type="term" value="F:magnesium ion binding"/>
    <property type="evidence" value="ECO:0000314"/>
    <property type="project" value="UniProtKB"/>
</dbReference>
<dbReference type="GO" id="GO:0008927">
    <property type="term" value="F:mannonate dehydratase activity"/>
    <property type="evidence" value="ECO:0000314"/>
    <property type="project" value="UniProtKB"/>
</dbReference>
<dbReference type="GO" id="GO:0009063">
    <property type="term" value="P:amino acid catabolic process"/>
    <property type="evidence" value="ECO:0007669"/>
    <property type="project" value="InterPro"/>
</dbReference>
<dbReference type="GO" id="GO:0016052">
    <property type="term" value="P:carbohydrate catabolic process"/>
    <property type="evidence" value="ECO:0000314"/>
    <property type="project" value="UniProtKB"/>
</dbReference>
<dbReference type="FunFam" id="3.20.20.120:FF:000004">
    <property type="entry name" value="D-galactonate dehydratase family protein"/>
    <property type="match status" value="1"/>
</dbReference>
<dbReference type="FunFam" id="3.30.390.10:FF:000002">
    <property type="entry name" value="D-galactonate dehydratase family protein"/>
    <property type="match status" value="1"/>
</dbReference>
<dbReference type="Gene3D" id="3.20.20.120">
    <property type="entry name" value="Enolase-like C-terminal domain"/>
    <property type="match status" value="1"/>
</dbReference>
<dbReference type="Gene3D" id="3.30.390.10">
    <property type="entry name" value="Enolase-like, N-terminal domain"/>
    <property type="match status" value="1"/>
</dbReference>
<dbReference type="InterPro" id="IPR034589">
    <property type="entry name" value="D-mannonate_dehydratase-like"/>
</dbReference>
<dbReference type="InterPro" id="IPR053379">
    <property type="entry name" value="D-mannonate_dehydratase_GalD"/>
</dbReference>
<dbReference type="InterPro" id="IPR034593">
    <property type="entry name" value="DgoD-like"/>
</dbReference>
<dbReference type="InterPro" id="IPR036849">
    <property type="entry name" value="Enolase-like_C_sf"/>
</dbReference>
<dbReference type="InterPro" id="IPR029017">
    <property type="entry name" value="Enolase-like_N"/>
</dbReference>
<dbReference type="InterPro" id="IPR029065">
    <property type="entry name" value="Enolase_C-like"/>
</dbReference>
<dbReference type="InterPro" id="IPR018110">
    <property type="entry name" value="Mandel_Rmase/mucon_lact_enz_CS"/>
</dbReference>
<dbReference type="InterPro" id="IPR013342">
    <property type="entry name" value="Mandelate_racemase_C"/>
</dbReference>
<dbReference type="InterPro" id="IPR013341">
    <property type="entry name" value="Mandelate_racemase_N_dom"/>
</dbReference>
<dbReference type="NCBIfam" id="NF043051">
    <property type="entry name" value="ManoateDhtManD"/>
    <property type="match status" value="1"/>
</dbReference>
<dbReference type="NCBIfam" id="NF011654">
    <property type="entry name" value="PRK15072.1"/>
    <property type="match status" value="1"/>
</dbReference>
<dbReference type="PANTHER" id="PTHR48080">
    <property type="entry name" value="D-GALACTONATE DEHYDRATASE-RELATED"/>
    <property type="match status" value="1"/>
</dbReference>
<dbReference type="PANTHER" id="PTHR48080:SF6">
    <property type="entry name" value="STARVATION-SENSING PROTEIN RSPA"/>
    <property type="match status" value="1"/>
</dbReference>
<dbReference type="Pfam" id="PF13378">
    <property type="entry name" value="MR_MLE_C"/>
    <property type="match status" value="1"/>
</dbReference>
<dbReference type="Pfam" id="PF02746">
    <property type="entry name" value="MR_MLE_N"/>
    <property type="match status" value="1"/>
</dbReference>
<dbReference type="SFLD" id="SFLDS00001">
    <property type="entry name" value="Enolase"/>
    <property type="match status" value="1"/>
</dbReference>
<dbReference type="SFLD" id="SFLDG00033">
    <property type="entry name" value="mannonate_dehydratase"/>
    <property type="match status" value="1"/>
</dbReference>
<dbReference type="SMART" id="SM00922">
    <property type="entry name" value="MR_MLE"/>
    <property type="match status" value="1"/>
</dbReference>
<dbReference type="SUPFAM" id="SSF51604">
    <property type="entry name" value="Enolase C-terminal domain-like"/>
    <property type="match status" value="1"/>
</dbReference>
<dbReference type="SUPFAM" id="SSF54826">
    <property type="entry name" value="Enolase N-terminal domain-like"/>
    <property type="match status" value="1"/>
</dbReference>
<dbReference type="PROSITE" id="PS00908">
    <property type="entry name" value="MR_MLE_1"/>
    <property type="match status" value="1"/>
</dbReference>
<reference key="1">
    <citation type="journal article" date="2008" name="J. Bacteriol.">
        <title>Insights into plant cell wall degradation from the genome sequence of the soil bacterium Cellvibrio japonicus.</title>
        <authorList>
            <person name="DeBoy R.T."/>
            <person name="Mongodin E.F."/>
            <person name="Fouts D.E."/>
            <person name="Tailford L.E."/>
            <person name="Khouri H."/>
            <person name="Emerson J.B."/>
            <person name="Mohamoud Y."/>
            <person name="Watkins K."/>
            <person name="Henrissat B."/>
            <person name="Gilbert H.J."/>
            <person name="Nelson K.E."/>
        </authorList>
    </citation>
    <scope>NUCLEOTIDE SEQUENCE [LARGE SCALE GENOMIC DNA]</scope>
    <source>
        <strain>Ueda107</strain>
    </source>
</reference>
<reference key="2">
    <citation type="journal article" date="2014" name="Biochemistry">
        <title>Discovery of function in the enolase superfamily: D-mannonate and D-gluconate dehydratases in the D-mannonate dehydratase subgroup.</title>
        <authorList>
            <person name="Wichelecki D.J."/>
            <person name="Balthazor B.M."/>
            <person name="Chau A.C."/>
            <person name="Vetting M.W."/>
            <person name="Fedorov A.A."/>
            <person name="Fedorov E.V."/>
            <person name="Lukk T."/>
            <person name="Patskovsky Y.V."/>
            <person name="Stead M.B."/>
            <person name="Hillerich B.S."/>
            <person name="Seidel R.D."/>
            <person name="Almo S.C."/>
            <person name="Gerlt J.A."/>
        </authorList>
    </citation>
    <scope>X-RAY CRYSTALLOGRAPHY (1.40 ANGSTROMS) IN COMPLEX WITH MAGNESIUM AND TARTRATE</scope>
    <scope>FUNCTION</scope>
    <scope>CATALYTIC ACTIVITY</scope>
    <scope>COFACTOR</scope>
    <scope>BIOPHYSICOCHEMICAL PROPERTIES</scope>
</reference>
<comment type="function">
    <text evidence="2">Has low D-mannonate dehydratase activity (in vitro), suggesting that this is not a physiological substrate and that it has no significant role in D-mannonate degradation in vivo. Has no detectable activity with a panel of 70 other acid sugars (in vitro).</text>
</comment>
<comment type="catalytic activity">
    <reaction evidence="2">
        <text>D-mannonate = 2-dehydro-3-deoxy-D-gluconate + H2O</text>
        <dbReference type="Rhea" id="RHEA:20097"/>
        <dbReference type="ChEBI" id="CHEBI:15377"/>
        <dbReference type="ChEBI" id="CHEBI:17767"/>
        <dbReference type="ChEBI" id="CHEBI:57990"/>
        <dbReference type="EC" id="4.2.1.8"/>
    </reaction>
</comment>
<comment type="cofactor">
    <cofactor evidence="2">
        <name>Mg(2+)</name>
        <dbReference type="ChEBI" id="CHEBI:18420"/>
    </cofactor>
    <text evidence="2">Binds 1 Mg(2+) ion per subunit.</text>
</comment>
<comment type="biophysicochemical properties">
    <kinetics>
        <text evidence="2">kcat is 0.03 sec(-1) with D-mannonate.</text>
    </kinetics>
</comment>
<comment type="similarity">
    <text evidence="3">Belongs to the mandelate racemase/muconate lactonizing enzyme family. GalD subfamily.</text>
</comment>
<accession>B3PDB1</accession>
<protein>
    <recommendedName>
        <fullName>D-galactonate dehydratase family member RspA</fullName>
        <ecNumber>4.2.1.-</ecNumber>
    </recommendedName>
    <alternativeName>
        <fullName>D-mannonate dehydratase</fullName>
        <ecNumber>4.2.1.8</ecNumber>
    </alternativeName>
    <alternativeName>
        <fullName>Starvation sensing protein RspA homolog</fullName>
    </alternativeName>
</protein>
<keyword id="KW-0002">3D-structure</keyword>
<keyword id="KW-0456">Lyase</keyword>
<keyword id="KW-0460">Magnesium</keyword>
<keyword id="KW-0479">Metal-binding</keyword>
<keyword id="KW-1185">Reference proteome</keyword>
<sequence>MKIVDAKVIVTCPGRNFVTLKIVTDQGIYGIGDATLNGREKSVVSYLEDYLIPVLIGRDPQQIEDIWQFFYRGAYWRRGPVGMTALAAIDVALWDIKAKLANMPLYQLLGGKSRERILSYTHANGKDLDSTLEAVRKAKDKGYKAIRVQCGIPGIAKTYGVSTNTKSYEPADADLPSVEVWSTEKYLNYIPDVFAAVRKEFGPDIHLLHDVHHRLTPIEAARLGKALEPYHLFWMEDAVPAENQESFKLIRQHTTTPLAVGEVFNSIHDCRELIQNQWIDYIRTTIVHAGGISQMRRIADFASLFHVRTGFHGATDLSPVCMGAALHFDYWVPNFGIQEHMAHSEQMNAVFPHAYTFNDGYFTPGEKPGHGVDIDEKLAAQYPYKRACLPVNRLEDGTLWHW</sequence>
<feature type="chain" id="PRO_0000429884" description="D-galactonate dehydratase family member RspA">
    <location>
        <begin position="1"/>
        <end position="402"/>
    </location>
</feature>
<feature type="active site" description="Proton donor/acceptor" evidence="1">
    <location>
        <position position="159"/>
    </location>
</feature>
<feature type="active site" description="Proton donor/acceptor" evidence="1">
    <location>
        <position position="212"/>
    </location>
</feature>
<feature type="binding site" evidence="1">
    <location>
        <position position="37"/>
    </location>
    <ligand>
        <name>substrate</name>
    </ligand>
</feature>
<feature type="binding site" evidence="1">
    <location>
        <position position="122"/>
    </location>
    <ligand>
        <name>substrate</name>
    </ligand>
</feature>
<feature type="binding site" evidence="2">
    <location>
        <position position="210"/>
    </location>
    <ligand>
        <name>Mg(2+)</name>
        <dbReference type="ChEBI" id="CHEBI:18420"/>
    </ligand>
</feature>
<feature type="binding site" evidence="2">
    <location>
        <position position="236"/>
    </location>
    <ligand>
        <name>Mg(2+)</name>
        <dbReference type="ChEBI" id="CHEBI:18420"/>
    </ligand>
</feature>
<feature type="binding site" evidence="2">
    <location>
        <position position="262"/>
    </location>
    <ligand>
        <name>Mg(2+)</name>
        <dbReference type="ChEBI" id="CHEBI:18420"/>
    </ligand>
</feature>
<feature type="binding site" evidence="1">
    <location>
        <position position="262"/>
    </location>
    <ligand>
        <name>substrate</name>
    </ligand>
</feature>
<feature type="binding site" evidence="1">
    <location>
        <position position="283"/>
    </location>
    <ligand>
        <name>substrate</name>
    </ligand>
</feature>
<feature type="binding site" evidence="1">
    <location>
        <position position="312"/>
    </location>
    <ligand>
        <name>substrate</name>
    </ligand>
</feature>
<feature type="binding site" evidence="1">
    <location>
        <position position="316"/>
    </location>
    <ligand>
        <name>substrate</name>
    </ligand>
</feature>
<feature type="binding site" evidence="1">
    <location>
        <position position="339"/>
    </location>
    <ligand>
        <name>substrate</name>
    </ligand>
</feature>
<feature type="strand" evidence="4">
    <location>
        <begin position="3"/>
        <end position="11"/>
    </location>
</feature>
<feature type="strand" evidence="4">
    <location>
        <begin position="13"/>
        <end position="15"/>
    </location>
</feature>
<feature type="strand" evidence="4">
    <location>
        <begin position="17"/>
        <end position="24"/>
    </location>
</feature>
<feature type="strand" evidence="4">
    <location>
        <begin position="29"/>
        <end position="33"/>
    </location>
</feature>
<feature type="helix" evidence="4">
    <location>
        <begin position="40"/>
        <end position="49"/>
    </location>
</feature>
<feature type="helix" evidence="4">
    <location>
        <begin position="51"/>
        <end position="55"/>
    </location>
</feature>
<feature type="helix" evidence="4">
    <location>
        <begin position="63"/>
        <end position="73"/>
    </location>
</feature>
<feature type="helix" evidence="4">
    <location>
        <begin position="80"/>
        <end position="100"/>
    </location>
</feature>
<feature type="helix" evidence="4">
    <location>
        <begin position="105"/>
        <end position="109"/>
    </location>
</feature>
<feature type="strand" evidence="4">
    <location>
        <begin position="115"/>
        <end position="127"/>
    </location>
</feature>
<feature type="helix" evidence="4">
    <location>
        <begin position="128"/>
        <end position="140"/>
    </location>
</feature>
<feature type="strand" evidence="4">
    <location>
        <begin position="144"/>
        <end position="150"/>
    </location>
</feature>
<feature type="strand" evidence="4">
    <location>
        <begin position="173"/>
        <end position="175"/>
    </location>
</feature>
<feature type="strand" evidence="4">
    <location>
        <begin position="178"/>
        <end position="181"/>
    </location>
</feature>
<feature type="helix" evidence="4">
    <location>
        <begin position="183"/>
        <end position="201"/>
    </location>
</feature>
<feature type="strand" evidence="4">
    <location>
        <begin position="203"/>
        <end position="210"/>
    </location>
</feature>
<feature type="helix" evidence="4">
    <location>
        <begin position="217"/>
        <end position="227"/>
    </location>
</feature>
<feature type="helix" evidence="4">
    <location>
        <begin position="228"/>
        <end position="230"/>
    </location>
</feature>
<feature type="strand" evidence="4">
    <location>
        <begin position="233"/>
        <end position="236"/>
    </location>
</feature>
<feature type="helix" evidence="4">
    <location>
        <begin position="246"/>
        <end position="253"/>
    </location>
</feature>
<feature type="strand" evidence="4">
    <location>
        <begin position="258"/>
        <end position="260"/>
    </location>
</feature>
<feature type="helix" evidence="4">
    <location>
        <begin position="267"/>
        <end position="269"/>
    </location>
</feature>
<feature type="helix" evidence="4">
    <location>
        <begin position="271"/>
        <end position="275"/>
    </location>
</feature>
<feature type="strand" evidence="4">
    <location>
        <begin position="280"/>
        <end position="282"/>
    </location>
</feature>
<feature type="turn" evidence="4">
    <location>
        <begin position="286"/>
        <end position="290"/>
    </location>
</feature>
<feature type="helix" evidence="4">
    <location>
        <begin position="291"/>
        <end position="303"/>
    </location>
</feature>
<feature type="turn" evidence="4">
    <location>
        <begin position="304"/>
        <end position="306"/>
    </location>
</feature>
<feature type="strand" evidence="4">
    <location>
        <begin position="308"/>
        <end position="311"/>
    </location>
</feature>
<feature type="helix" evidence="4">
    <location>
        <begin position="319"/>
        <end position="331"/>
    </location>
</feature>
<feature type="strand" evidence="4">
    <location>
        <begin position="335"/>
        <end position="339"/>
    </location>
</feature>
<feature type="helix" evidence="4">
    <location>
        <begin position="345"/>
        <end position="350"/>
    </location>
</feature>
<feature type="strand" evidence="4">
    <location>
        <begin position="356"/>
        <end position="358"/>
    </location>
</feature>
<feature type="strand" evidence="4">
    <location>
        <begin position="361"/>
        <end position="363"/>
    </location>
</feature>
<feature type="strand" evidence="4">
    <location>
        <begin position="366"/>
        <end position="369"/>
    </location>
</feature>
<feature type="helix" evidence="4">
    <location>
        <begin position="376"/>
        <end position="379"/>
    </location>
</feature>
<feature type="strand" evidence="4">
    <location>
        <begin position="391"/>
        <end position="394"/>
    </location>
</feature>